<keyword id="KW-0227">DNA damage</keyword>
<keyword id="KW-0234">DNA repair</keyword>
<keyword id="KW-0479">Metal-binding</keyword>
<keyword id="KW-0539">Nucleus</keyword>
<keyword id="KW-1185">Reference proteome</keyword>
<keyword id="KW-0804">Transcription</keyword>
<keyword id="KW-0805">Transcription regulation</keyword>
<keyword id="KW-0862">Zinc</keyword>
<keyword id="KW-0863">Zinc-finger</keyword>
<dbReference type="EMBL" id="CR380950">
    <property type="protein sequence ID" value="CAG58398.1"/>
    <property type="molecule type" value="Genomic_DNA"/>
</dbReference>
<dbReference type="RefSeq" id="XP_445487.1">
    <property type="nucleotide sequence ID" value="XM_445487.1"/>
</dbReference>
<dbReference type="SMR" id="Q6FWA7"/>
<dbReference type="FunCoup" id="Q6FWA7">
    <property type="interactions" value="1222"/>
</dbReference>
<dbReference type="STRING" id="284593.Q6FWA7"/>
<dbReference type="EnsemblFungi" id="CAGL0D01650g-T">
    <property type="protein sequence ID" value="CAGL0D01650g-T-p1"/>
    <property type="gene ID" value="CAGL0D01650g"/>
</dbReference>
<dbReference type="KEGG" id="cgr:2887225"/>
<dbReference type="CGD" id="CAL0128459">
    <property type="gene designation" value="CAGL0D01650g"/>
</dbReference>
<dbReference type="VEuPathDB" id="FungiDB:B1J91_D01650g"/>
<dbReference type="VEuPathDB" id="FungiDB:CAGL0D01650g"/>
<dbReference type="eggNOG" id="KOG2487">
    <property type="taxonomic scope" value="Eukaryota"/>
</dbReference>
<dbReference type="HOGENOM" id="CLU_040211_0_0_1"/>
<dbReference type="InParanoid" id="Q6FWA7"/>
<dbReference type="OMA" id="QGCDITS"/>
<dbReference type="Proteomes" id="UP000002428">
    <property type="component" value="Chromosome D"/>
</dbReference>
<dbReference type="GO" id="GO:0000439">
    <property type="term" value="C:transcription factor TFIIH core complex"/>
    <property type="evidence" value="ECO:0007669"/>
    <property type="project" value="InterPro"/>
</dbReference>
<dbReference type="GO" id="GO:0005675">
    <property type="term" value="C:transcription factor TFIIH holo complex"/>
    <property type="evidence" value="ECO:0007669"/>
    <property type="project" value="TreeGrafter"/>
</dbReference>
<dbReference type="GO" id="GO:0008270">
    <property type="term" value="F:zinc ion binding"/>
    <property type="evidence" value="ECO:0007669"/>
    <property type="project" value="UniProtKB-KW"/>
</dbReference>
<dbReference type="GO" id="GO:0006289">
    <property type="term" value="P:nucleotide-excision repair"/>
    <property type="evidence" value="ECO:0007669"/>
    <property type="project" value="InterPro"/>
</dbReference>
<dbReference type="GO" id="GO:0006355">
    <property type="term" value="P:regulation of DNA-templated transcription"/>
    <property type="evidence" value="ECO:0007669"/>
    <property type="project" value="InterPro"/>
</dbReference>
<dbReference type="FunFam" id="3.40.50.410:FF:000093">
    <property type="entry name" value="Transcription initiation factor TFIIH subunit"/>
    <property type="match status" value="1"/>
</dbReference>
<dbReference type="Gene3D" id="3.40.50.410">
    <property type="entry name" value="von Willebrand factor, type A domain"/>
    <property type="match status" value="1"/>
</dbReference>
<dbReference type="InterPro" id="IPR004600">
    <property type="entry name" value="TFIIH_Tfb4/GTF2H3"/>
</dbReference>
<dbReference type="InterPro" id="IPR036465">
    <property type="entry name" value="vWFA_dom_sf"/>
</dbReference>
<dbReference type="PANTHER" id="PTHR12831:SF0">
    <property type="entry name" value="GENERAL TRANSCRIPTION FACTOR IIH SUBUNIT 3"/>
    <property type="match status" value="1"/>
</dbReference>
<dbReference type="PANTHER" id="PTHR12831">
    <property type="entry name" value="TRANSCRIPTION INITIATION FACTOR IIH TFIIH , POLYPEPTIDE 3-RELATED"/>
    <property type="match status" value="1"/>
</dbReference>
<dbReference type="Pfam" id="PF03850">
    <property type="entry name" value="Tfb4"/>
    <property type="match status" value="1"/>
</dbReference>
<accession>Q6FWA7</accession>
<reference key="1">
    <citation type="journal article" date="2004" name="Nature">
        <title>Genome evolution in yeasts.</title>
        <authorList>
            <person name="Dujon B."/>
            <person name="Sherman D."/>
            <person name="Fischer G."/>
            <person name="Durrens P."/>
            <person name="Casaregola S."/>
            <person name="Lafontaine I."/>
            <person name="de Montigny J."/>
            <person name="Marck C."/>
            <person name="Neuveglise C."/>
            <person name="Talla E."/>
            <person name="Goffard N."/>
            <person name="Frangeul L."/>
            <person name="Aigle M."/>
            <person name="Anthouard V."/>
            <person name="Babour A."/>
            <person name="Barbe V."/>
            <person name="Barnay S."/>
            <person name="Blanchin S."/>
            <person name="Beckerich J.-M."/>
            <person name="Beyne E."/>
            <person name="Bleykasten C."/>
            <person name="Boisrame A."/>
            <person name="Boyer J."/>
            <person name="Cattolico L."/>
            <person name="Confanioleri F."/>
            <person name="de Daruvar A."/>
            <person name="Despons L."/>
            <person name="Fabre E."/>
            <person name="Fairhead C."/>
            <person name="Ferry-Dumazet H."/>
            <person name="Groppi A."/>
            <person name="Hantraye F."/>
            <person name="Hennequin C."/>
            <person name="Jauniaux N."/>
            <person name="Joyet P."/>
            <person name="Kachouri R."/>
            <person name="Kerrest A."/>
            <person name="Koszul R."/>
            <person name="Lemaire M."/>
            <person name="Lesur I."/>
            <person name="Ma L."/>
            <person name="Muller H."/>
            <person name="Nicaud J.-M."/>
            <person name="Nikolski M."/>
            <person name="Oztas S."/>
            <person name="Ozier-Kalogeropoulos O."/>
            <person name="Pellenz S."/>
            <person name="Potier S."/>
            <person name="Richard G.-F."/>
            <person name="Straub M.-L."/>
            <person name="Suleau A."/>
            <person name="Swennen D."/>
            <person name="Tekaia F."/>
            <person name="Wesolowski-Louvel M."/>
            <person name="Westhof E."/>
            <person name="Wirth B."/>
            <person name="Zeniou-Meyer M."/>
            <person name="Zivanovic Y."/>
            <person name="Bolotin-Fukuhara M."/>
            <person name="Thierry A."/>
            <person name="Bouchier C."/>
            <person name="Caudron B."/>
            <person name="Scarpelli C."/>
            <person name="Gaillardin C."/>
            <person name="Weissenbach J."/>
            <person name="Wincker P."/>
            <person name="Souciet J.-L."/>
        </authorList>
    </citation>
    <scope>NUCLEOTIDE SEQUENCE [LARGE SCALE GENOMIC DNA]</scope>
    <source>
        <strain>ATCC 2001 / BCRC 20586 / JCM 3761 / NBRC 0622 / NRRL Y-65 / CBS 138</strain>
    </source>
</reference>
<sequence length="335" mass="37342">MDAIADPNFQQTKLRSTATEDIPSLLTVVLDISPRLWAEFDHRSGEKQSVTTVLKSLIVFLNSHLAFNSANQVAVIAAFSQGIQYLYPRSSDTSEQNAGNSKDLSIISSHMYRRFRNVDETLIEEFYKLYQREESLIDKPVQKSTLSGAMAAALTYTNRLTKEFESISLRSRLLVITCGSSREKDEIFQYIPIMNCIFSATKLKCPIDVIKIGGNKQSTFLQQTTDATNGVYIHLESTNGIIQYLSTAMSIDPSLRQIIVRPTQGSVDFRTSCYLTGKVVAIGYICSVCLCVLSIIPPGNKCPACDSQFDERVIAKLKKKPVVPKSTLKKVKKKV</sequence>
<evidence type="ECO:0000250" key="1"/>
<evidence type="ECO:0000250" key="2">
    <source>
        <dbReference type="UniProtKB" id="Q12004"/>
    </source>
</evidence>
<evidence type="ECO:0000305" key="3"/>
<protein>
    <recommendedName>
        <fullName>General transcription and DNA repair factor IIH subunit TFB4</fullName>
        <shortName>TFIIH subunit TFB4</shortName>
    </recommendedName>
    <alternativeName>
        <fullName>RNA polymerase II transcription factor B subunit 4</fullName>
    </alternativeName>
</protein>
<organism>
    <name type="scientific">Candida glabrata (strain ATCC 2001 / BCRC 20586 / JCM 3761 / NBRC 0622 / NRRL Y-65 / CBS 138)</name>
    <name type="common">Yeast</name>
    <name type="synonym">Nakaseomyces glabratus</name>
    <dbReference type="NCBI Taxonomy" id="284593"/>
    <lineage>
        <taxon>Eukaryota</taxon>
        <taxon>Fungi</taxon>
        <taxon>Dikarya</taxon>
        <taxon>Ascomycota</taxon>
        <taxon>Saccharomycotina</taxon>
        <taxon>Saccharomycetes</taxon>
        <taxon>Saccharomycetales</taxon>
        <taxon>Saccharomycetaceae</taxon>
        <taxon>Nakaseomyces</taxon>
    </lineage>
</organism>
<comment type="function">
    <text evidence="2">Component of the general transcription and DNA repair factor IIH (TFIIH) core complex, which is involved in general and transcription-coupled nucleotide excision repair (NER) of damaged DNA and, when complexed to TFIIK, in RNA transcription by RNA polymerase II. In NER, TFIIH acts by opening DNA around the lesion to allow the excision of the damaged oligonucleotide and its replacement by a new DNA fragment. In transcription, TFIIH has an essential role in transcription initiation. When the pre-initiation complex (PIC) has been established, TFIIH is required for promoter opening and promoter escape. Phosphorylation of the C-terminal tail (CTD) of the largest subunit of RNA polymerase II by the kinase module TFIIK controls the initiation of transcription.</text>
</comment>
<comment type="subunit">
    <text evidence="2">Component of the 7-subunit TFIIH core complex composed of XPB/SSL2, XPD/RAD3, SSL1, TFB1, TFB2, TFB4 and TFB5, which is active in NER. The core complex associates with the 3-subunit CTD-kinase module TFIIK composed of CCL1, KIN28 and TFB3 to form the 10-subunit holoenzyme (holo-TFIIH) active in transcription.</text>
</comment>
<comment type="subcellular location">
    <subcellularLocation>
        <location evidence="1">Nucleus</location>
    </subcellularLocation>
</comment>
<comment type="similarity">
    <text evidence="3">Belongs to the TFB4 family.</text>
</comment>
<name>TFB4_CANGA</name>
<proteinExistence type="inferred from homology"/>
<gene>
    <name type="primary">TFB4</name>
    <name type="ordered locus">CAGL0D01650g</name>
</gene>
<feature type="chain" id="PRO_0000119270" description="General transcription and DNA repair factor IIH subunit TFB4">
    <location>
        <begin position="1"/>
        <end position="335"/>
    </location>
</feature>
<feature type="zinc finger region" description="C4-type">
    <location>
        <begin position="286"/>
        <end position="305"/>
    </location>
</feature>